<dbReference type="EC" id="3.6.5.-" evidence="2"/>
<dbReference type="EMBL" id="AY248751">
    <property type="protein sequence ID" value="AAP03080.1"/>
    <property type="molecule type" value="mRNA"/>
</dbReference>
<dbReference type="SMR" id="Q7ZZX9"/>
<dbReference type="Proteomes" id="UP000515129">
    <property type="component" value="Unplaced"/>
</dbReference>
<dbReference type="GO" id="GO:0005829">
    <property type="term" value="C:cytosol"/>
    <property type="evidence" value="ECO:0007669"/>
    <property type="project" value="UniProtKB-SubCell"/>
</dbReference>
<dbReference type="GO" id="GO:0005635">
    <property type="term" value="C:nuclear envelope"/>
    <property type="evidence" value="ECO:0007669"/>
    <property type="project" value="UniProtKB-SubCell"/>
</dbReference>
<dbReference type="GO" id="GO:0005634">
    <property type="term" value="C:nucleus"/>
    <property type="evidence" value="ECO:0000250"/>
    <property type="project" value="UniProtKB"/>
</dbReference>
<dbReference type="GO" id="GO:0005525">
    <property type="term" value="F:GTP binding"/>
    <property type="evidence" value="ECO:0000250"/>
    <property type="project" value="UniProtKB"/>
</dbReference>
<dbReference type="GO" id="GO:0003924">
    <property type="term" value="F:GTPase activity"/>
    <property type="evidence" value="ECO:0000250"/>
    <property type="project" value="UniProtKB"/>
</dbReference>
<dbReference type="GO" id="GO:0000287">
    <property type="term" value="F:magnesium ion binding"/>
    <property type="evidence" value="ECO:0000250"/>
    <property type="project" value="UniProtKB"/>
</dbReference>
<dbReference type="GO" id="GO:0046039">
    <property type="term" value="P:GTP metabolic process"/>
    <property type="evidence" value="ECO:0000250"/>
    <property type="project" value="UniProtKB"/>
</dbReference>
<dbReference type="GO" id="GO:0000070">
    <property type="term" value="P:mitotic sister chromatid segregation"/>
    <property type="evidence" value="ECO:0000250"/>
    <property type="project" value="UniProtKB"/>
</dbReference>
<dbReference type="GO" id="GO:0006606">
    <property type="term" value="P:protein import into nucleus"/>
    <property type="evidence" value="ECO:0000250"/>
    <property type="project" value="UniProtKB"/>
</dbReference>
<dbReference type="GO" id="GO:0000054">
    <property type="term" value="P:ribosomal subunit export from nucleus"/>
    <property type="evidence" value="ECO:0007669"/>
    <property type="project" value="TreeGrafter"/>
</dbReference>
<dbReference type="GO" id="GO:0061015">
    <property type="term" value="P:snRNA import into nucleus"/>
    <property type="evidence" value="ECO:0000250"/>
    <property type="project" value="UniProtKB"/>
</dbReference>
<dbReference type="CDD" id="cd00877">
    <property type="entry name" value="Ran"/>
    <property type="match status" value="1"/>
</dbReference>
<dbReference type="FunFam" id="3.40.50.300:FF:000131">
    <property type="entry name" value="GTP-binding nuclear protein Ran"/>
    <property type="match status" value="1"/>
</dbReference>
<dbReference type="Gene3D" id="3.40.50.300">
    <property type="entry name" value="P-loop containing nucleotide triphosphate hydrolases"/>
    <property type="match status" value="1"/>
</dbReference>
<dbReference type="InterPro" id="IPR027417">
    <property type="entry name" value="P-loop_NTPase"/>
</dbReference>
<dbReference type="InterPro" id="IPR002041">
    <property type="entry name" value="Ran_GTPase"/>
</dbReference>
<dbReference type="InterPro" id="IPR005225">
    <property type="entry name" value="Small_GTP-bd"/>
</dbReference>
<dbReference type="InterPro" id="IPR001806">
    <property type="entry name" value="Small_GTPase"/>
</dbReference>
<dbReference type="NCBIfam" id="TIGR00231">
    <property type="entry name" value="small_GTP"/>
    <property type="match status" value="1"/>
</dbReference>
<dbReference type="PANTHER" id="PTHR24071:SF17">
    <property type="entry name" value="GTP-BINDING NUCLEAR PROTEIN RAN"/>
    <property type="match status" value="1"/>
</dbReference>
<dbReference type="PANTHER" id="PTHR24071">
    <property type="entry name" value="RAN GTPASE"/>
    <property type="match status" value="1"/>
</dbReference>
<dbReference type="Pfam" id="PF00071">
    <property type="entry name" value="Ras"/>
    <property type="match status" value="1"/>
</dbReference>
<dbReference type="PRINTS" id="PR00627">
    <property type="entry name" value="GTPRANTC4"/>
</dbReference>
<dbReference type="SMART" id="SM00175">
    <property type="entry name" value="RAB"/>
    <property type="match status" value="1"/>
</dbReference>
<dbReference type="SMART" id="SM00176">
    <property type="entry name" value="RAN"/>
    <property type="match status" value="1"/>
</dbReference>
<dbReference type="SMART" id="SM00173">
    <property type="entry name" value="RAS"/>
    <property type="match status" value="1"/>
</dbReference>
<dbReference type="SMART" id="SM00174">
    <property type="entry name" value="RHO"/>
    <property type="match status" value="1"/>
</dbReference>
<dbReference type="SUPFAM" id="SSF52540">
    <property type="entry name" value="P-loop containing nucleoside triphosphate hydrolases"/>
    <property type="match status" value="1"/>
</dbReference>
<dbReference type="PROSITE" id="PS51418">
    <property type="entry name" value="RAN"/>
    <property type="match status" value="1"/>
</dbReference>
<proteinExistence type="evidence at transcript level"/>
<name>RAN_CARAU</name>
<keyword id="KW-0963">Cytoplasm</keyword>
<keyword id="KW-0342">GTP-binding</keyword>
<keyword id="KW-0378">Hydrolase</keyword>
<keyword id="KW-0460">Magnesium</keyword>
<keyword id="KW-0479">Metal-binding</keyword>
<keyword id="KW-0547">Nucleotide-binding</keyword>
<keyword id="KW-0539">Nucleus</keyword>
<keyword id="KW-0653">Protein transport</keyword>
<keyword id="KW-1185">Reference proteome</keyword>
<keyword id="KW-0813">Transport</keyword>
<feature type="chain" id="PRO_0000208705" description="GTP-binding nuclear protein Ran">
    <location>
        <begin position="1"/>
        <end position="215"/>
    </location>
</feature>
<feature type="domain" description="Small GTPase Ran-type" evidence="4">
    <location>
        <begin position="6"/>
        <end position="170"/>
    </location>
</feature>
<feature type="region of interest" description="Switch-I" evidence="4">
    <location>
        <begin position="36"/>
        <end position="44"/>
    </location>
</feature>
<feature type="region of interest" description="Switch-II" evidence="4">
    <location>
        <begin position="67"/>
        <end position="83"/>
    </location>
</feature>
<feature type="region of interest" description="Interaction with RANBP1" evidence="2">
    <location>
        <begin position="210"/>
        <end position="215"/>
    </location>
</feature>
<feature type="binding site" evidence="1">
    <location>
        <begin position="17"/>
        <end position="24"/>
    </location>
    <ligand>
        <name>GTP</name>
        <dbReference type="ChEBI" id="CHEBI:37565"/>
    </ligand>
</feature>
<feature type="binding site" evidence="1">
    <location>
        <begin position="35"/>
        <end position="41"/>
    </location>
    <ligand>
        <name>GTP</name>
        <dbReference type="ChEBI" id="CHEBI:37565"/>
    </ligand>
</feature>
<feature type="binding site" evidence="1">
    <location>
        <position position="67"/>
    </location>
    <ligand>
        <name>GTP</name>
        <dbReference type="ChEBI" id="CHEBI:37565"/>
    </ligand>
</feature>
<feature type="binding site" evidence="1">
    <location>
        <begin position="121"/>
        <end position="124"/>
    </location>
    <ligand>
        <name>GTP</name>
        <dbReference type="ChEBI" id="CHEBI:37565"/>
    </ligand>
</feature>
<feature type="binding site" evidence="1">
    <location>
        <begin position="149"/>
        <end position="151"/>
    </location>
    <ligand>
        <name>GTP</name>
        <dbReference type="ChEBI" id="CHEBI:37565"/>
    </ligand>
</feature>
<feature type="site" description="Essential for GTP hydrolysis" evidence="2">
    <location>
        <position position="68"/>
    </location>
</feature>
<gene>
    <name type="primary">ran</name>
</gene>
<organism>
    <name type="scientific">Carassius auratus</name>
    <name type="common">Goldfish</name>
    <dbReference type="NCBI Taxonomy" id="7957"/>
    <lineage>
        <taxon>Eukaryota</taxon>
        <taxon>Metazoa</taxon>
        <taxon>Chordata</taxon>
        <taxon>Craniata</taxon>
        <taxon>Vertebrata</taxon>
        <taxon>Euteleostomi</taxon>
        <taxon>Actinopterygii</taxon>
        <taxon>Neopterygii</taxon>
        <taxon>Teleostei</taxon>
        <taxon>Ostariophysi</taxon>
        <taxon>Cypriniformes</taxon>
        <taxon>Cyprinidae</taxon>
        <taxon>Cyprininae</taxon>
        <taxon>Carassius</taxon>
    </lineage>
</organism>
<sequence>MAENEPQVQFKLVLVGDGGTGKTTFVKRHLTGEFEKKYVATLGVEVHPLVFHTNRGPIKYNVWDTAGQEKFGGLRDGYYIQAQCAIIMFDVTSRVTYKNVPNWHRDLVRVCENIPIVLCGNKVDIKDRKVKAKSIVFHRKKNLQYYDISAKSNYNFEKPFLWLARKLIGDPNLEFVEMSALAPPEIAMDPSLAAQYEHDLKVASETALPDEDDDL</sequence>
<evidence type="ECO:0000250" key="1">
    <source>
        <dbReference type="UniProtKB" id="P62825"/>
    </source>
</evidence>
<evidence type="ECO:0000250" key="2">
    <source>
        <dbReference type="UniProtKB" id="P62826"/>
    </source>
</evidence>
<evidence type="ECO:0000250" key="3">
    <source>
        <dbReference type="UniProtKB" id="P62827"/>
    </source>
</evidence>
<evidence type="ECO:0000255" key="4">
    <source>
        <dbReference type="PROSITE-ProRule" id="PRU00752"/>
    </source>
</evidence>
<evidence type="ECO:0000305" key="5"/>
<reference key="1">
    <citation type="submission" date="2003-03" db="EMBL/GenBank/DDBJ databases">
        <title>Full length cDNA cloning and tissue expression specificity of Ran gene in color crucian carp.</title>
        <authorList>
            <person name="Li C."/>
            <person name="Liu J."/>
            <person name="Shi Y."/>
            <person name="Yang S."/>
            <person name="Gui J."/>
        </authorList>
    </citation>
    <scope>NUCLEOTIDE SEQUENCE [MRNA]</scope>
</reference>
<comment type="function">
    <text evidence="2">GTPase involved in nucleocytoplasmic transport, participating both to the import and the export from the nucleus of proteins and RNAs. Switches between a cytoplasmic GDP- and a nuclear GTP-bound state by nucleotide exchange and GTP hydrolysis. Nuclear import receptors such as importin beta bind their substrates only in the absence of GTP-bound RAN and release them upon direct interaction with GTP-bound RAN, while export receptors behave in the opposite way. Thereby, RAN controls cargo loading and release by transport receptors in the proper compartment and ensures the directionality of the transport. Interaction with RANBP1 induces a conformation change in the complex formed by XPO1 and RAN that triggers the release of the nuclear export signal of cargo proteins. RAN (GTP-bound form) triggers microtubule assembly at mitotic chromosomes and is required for normal mitotic spindle assembly and chromosome segregation. Required for normal progress through mitosis.</text>
</comment>
<comment type="catalytic activity">
    <reaction evidence="2">
        <text>GTP + H2O = GDP + phosphate + H(+)</text>
        <dbReference type="Rhea" id="RHEA:19669"/>
        <dbReference type="ChEBI" id="CHEBI:15377"/>
        <dbReference type="ChEBI" id="CHEBI:15378"/>
        <dbReference type="ChEBI" id="CHEBI:37565"/>
        <dbReference type="ChEBI" id="CHEBI:43474"/>
        <dbReference type="ChEBI" id="CHEBI:58189"/>
    </reaction>
    <physiologicalReaction direction="left-to-right" evidence="2">
        <dbReference type="Rhea" id="RHEA:19670"/>
    </physiologicalReaction>
</comment>
<comment type="cofactor">
    <cofactor evidence="2">
        <name>Mg(2+)</name>
        <dbReference type="ChEBI" id="CHEBI:18420"/>
    </cofactor>
    <text evidence="2">Mg(2+) interacts primarily with the phosphate groups of the bound guanine nucleotide.</text>
</comment>
<comment type="subunit">
    <text evidence="1 2 3">Monomer. Interacts with RANGAP1, which promotes RAN-mediated GTP hydrolysis. Interacts with KPNB1. Interaction with KPNB1 inhibits RANGAP1-mediated stimulation of GTPase activity. Interacts with RCC1 which promotes the exchange of RAN-bound GDP by GTP. Interaction with KPNB1 inhibits RCC1-mediated exchange of RAN-bound GDP by GTP. Interacts (GTP-bound form) with TNPO1; the interaction is direct. Interacts (GTP-bound form) with TNPO3; the interaction is direct. Interacts with KPNB1 and with TNPO1; both inhibit RAN GTPase activity. Interacts (via C-terminus) with RANBP1, which alleviates the inhibition of RAN GTPase activity. Interacts with RANGRF, which promotes the release of bound guanine nucleotide. RANGRF and RCC1 compete for an overlapping binding site on RAN. Identified in a complex with KPNA2 and CSE1L; interaction with RANBP1 mediates dissociation of RAN from this complex. Interaction with both RANBP1 and KPNA2 promotes dissociation of the complex between RAN and KPNB1. Identified in a complex composed of RAN, RANGAP1 and RANBP1. Identified in a complex that contains TNPO1, RAN and RANBP1. Identified in a nuclear export complex with XPO1. Interaction with RANBP1 or RANBP2 induces a conformation change in the complex formed by XPO1 and RAN that triggers the release of the nuclear export signal of cargo proteins. Component of a nuclear export receptor complex composed of KPNB1, RAN, SNUPN and XPO1.</text>
</comment>
<comment type="subcellular location">
    <subcellularLocation>
        <location evidence="2">Nucleus</location>
    </subcellularLocation>
    <subcellularLocation>
        <location evidence="2">Nucleus envelope</location>
    </subcellularLocation>
    <subcellularLocation>
        <location evidence="2">Cytoplasm</location>
        <location evidence="2">Cytosol</location>
    </subcellularLocation>
    <subcellularLocation>
        <location evidence="2">Cytoplasm</location>
    </subcellularLocation>
    <text evidence="2">Predominantly nuclear during interphase. Becomes dispersed throughout the cytoplasm during mitosis (By similarity).</text>
</comment>
<comment type="similarity">
    <text evidence="4 5">Belongs to the small GTPase superfamily. Ran family.</text>
</comment>
<accession>Q7ZZX9</accession>
<protein>
    <recommendedName>
        <fullName>GTP-binding nuclear protein Ran</fullName>
        <ecNumber evidence="2">3.6.5.-</ecNumber>
    </recommendedName>
    <alternativeName>
        <fullName>GTPase Ran</fullName>
    </alternativeName>
    <alternativeName>
        <fullName>Ras-related nuclear protein</fullName>
    </alternativeName>
</protein>